<evidence type="ECO:0000250" key="1">
    <source>
        <dbReference type="UniProtKB" id="P48730"/>
    </source>
</evidence>
<evidence type="ECO:0000255" key="2">
    <source>
        <dbReference type="PROSITE-ProRule" id="PRU00159"/>
    </source>
</evidence>
<evidence type="ECO:0000256" key="3">
    <source>
        <dbReference type="SAM" id="MobiDB-lite"/>
    </source>
</evidence>
<evidence type="ECO:0000269" key="4">
    <source>
    </source>
</evidence>
<evidence type="ECO:0000303" key="5">
    <source>
    </source>
</evidence>
<evidence type="ECO:0000303" key="6">
    <source>
    </source>
</evidence>
<evidence type="ECO:0000305" key="7"/>
<evidence type="ECO:0000312" key="8">
    <source>
        <dbReference type="Araport" id="AT3G23340"/>
    </source>
</evidence>
<evidence type="ECO:0000312" key="9">
    <source>
        <dbReference type="EMBL" id="BAB02278.1"/>
    </source>
</evidence>
<name>CKL10_ARATH</name>
<reference key="1">
    <citation type="journal article" date="2005" name="Plant Cell">
        <title>Plasmodesmal-associated protein kinase in tobacco and Arabidopsis recognizes a subset of non-cell-autonomous proteins.</title>
        <authorList>
            <person name="Lee J.-Y."/>
            <person name="Taoka K."/>
            <person name="Yoo B.-C."/>
            <person name="Ben-Nissan G."/>
            <person name="Kim D.-J."/>
            <person name="Lucas W.J."/>
        </authorList>
    </citation>
    <scope>NUCLEOTIDE SEQUENCE [MRNA]</scope>
    <scope>SUBCELLULAR LOCATION</scope>
</reference>
<reference key="2">
    <citation type="journal article" date="2000" name="DNA Res.">
        <title>Structural analysis of Arabidopsis thaliana chromosome 3. I. Sequence features of the regions of 4,504,864 bp covered by sixty P1 and TAC clones.</title>
        <authorList>
            <person name="Sato S."/>
            <person name="Nakamura Y."/>
            <person name="Kaneko T."/>
            <person name="Katoh T."/>
            <person name="Asamizu E."/>
            <person name="Tabata S."/>
        </authorList>
    </citation>
    <scope>NUCLEOTIDE SEQUENCE [LARGE SCALE GENOMIC DNA]</scope>
    <source>
        <strain>cv. Columbia</strain>
    </source>
</reference>
<reference key="3">
    <citation type="journal article" date="2017" name="Plant J.">
        <title>Araport11: a complete reannotation of the Arabidopsis thaliana reference genome.</title>
        <authorList>
            <person name="Cheng C.Y."/>
            <person name="Krishnakumar V."/>
            <person name="Chan A.P."/>
            <person name="Thibaud-Nissen F."/>
            <person name="Schobel S."/>
            <person name="Town C.D."/>
        </authorList>
    </citation>
    <scope>GENOME REANNOTATION</scope>
    <source>
        <strain>cv. Columbia</strain>
    </source>
</reference>
<reference key="4">
    <citation type="journal article" date="2003" name="Science">
        <title>Empirical analysis of transcriptional activity in the Arabidopsis genome.</title>
        <authorList>
            <person name="Yamada K."/>
            <person name="Lim J."/>
            <person name="Dale J.M."/>
            <person name="Chen H."/>
            <person name="Shinn P."/>
            <person name="Palm C.J."/>
            <person name="Southwick A.M."/>
            <person name="Wu H.C."/>
            <person name="Kim C.J."/>
            <person name="Nguyen M."/>
            <person name="Pham P.K."/>
            <person name="Cheuk R.F."/>
            <person name="Karlin-Newmann G."/>
            <person name="Liu S.X."/>
            <person name="Lam B."/>
            <person name="Sakano H."/>
            <person name="Wu T."/>
            <person name="Yu G."/>
            <person name="Miranda M."/>
            <person name="Quach H.L."/>
            <person name="Tripp M."/>
            <person name="Chang C.H."/>
            <person name="Lee J.M."/>
            <person name="Toriumi M.J."/>
            <person name="Chan M.M."/>
            <person name="Tang C.C."/>
            <person name="Onodera C.S."/>
            <person name="Deng J.M."/>
            <person name="Akiyama K."/>
            <person name="Ansari Y."/>
            <person name="Arakawa T."/>
            <person name="Banh J."/>
            <person name="Banno F."/>
            <person name="Bowser L."/>
            <person name="Brooks S.Y."/>
            <person name="Carninci P."/>
            <person name="Chao Q."/>
            <person name="Choy N."/>
            <person name="Enju A."/>
            <person name="Goldsmith A.D."/>
            <person name="Gurjal M."/>
            <person name="Hansen N.F."/>
            <person name="Hayashizaki Y."/>
            <person name="Johnson-Hopson C."/>
            <person name="Hsuan V.W."/>
            <person name="Iida K."/>
            <person name="Karnes M."/>
            <person name="Khan S."/>
            <person name="Koesema E."/>
            <person name="Ishida J."/>
            <person name="Jiang P.X."/>
            <person name="Jones T."/>
            <person name="Kawai J."/>
            <person name="Kamiya A."/>
            <person name="Meyers C."/>
            <person name="Nakajima M."/>
            <person name="Narusaka M."/>
            <person name="Seki M."/>
            <person name="Sakurai T."/>
            <person name="Satou M."/>
            <person name="Tamse R."/>
            <person name="Vaysberg M."/>
            <person name="Wallender E.K."/>
            <person name="Wong C."/>
            <person name="Yamamura Y."/>
            <person name="Yuan S."/>
            <person name="Shinozaki K."/>
            <person name="Davis R.W."/>
            <person name="Theologis A."/>
            <person name="Ecker J.R."/>
        </authorList>
    </citation>
    <scope>NUCLEOTIDE SEQUENCE [LARGE SCALE MRNA]</scope>
    <source>
        <strain>cv. Columbia</strain>
    </source>
</reference>
<reference key="5">
    <citation type="journal article" date="1995" name="Plant Physiol.">
        <title>Multiple isoforms of Arabidopsis casein kinase I combine conserved catalytic domains with variable carboxyl-terminal extensions.</title>
        <authorList>
            <person name="Klimczak L.J."/>
            <person name="Farini D."/>
            <person name="Lin C."/>
            <person name="Ponti D."/>
            <person name="Cashmore A.R."/>
            <person name="Giuliano G."/>
        </authorList>
    </citation>
    <scope>NUCLEOTIDE SEQUENCE [MRNA] OF 26-442</scope>
</reference>
<comment type="function">
    <text evidence="1">Casein kinases are operationally defined by their preferential utilization of acidic proteins such as caseins as substrates. It can phosphorylate a large number of proteins.</text>
</comment>
<comment type="catalytic activity">
    <reaction evidence="7">
        <text>L-seryl-[protein] + ATP = O-phospho-L-seryl-[protein] + ADP + H(+)</text>
        <dbReference type="Rhea" id="RHEA:17989"/>
        <dbReference type="Rhea" id="RHEA-COMP:9863"/>
        <dbReference type="Rhea" id="RHEA-COMP:11604"/>
        <dbReference type="ChEBI" id="CHEBI:15378"/>
        <dbReference type="ChEBI" id="CHEBI:29999"/>
        <dbReference type="ChEBI" id="CHEBI:30616"/>
        <dbReference type="ChEBI" id="CHEBI:83421"/>
        <dbReference type="ChEBI" id="CHEBI:456216"/>
        <dbReference type="EC" id="2.7.11.1"/>
    </reaction>
</comment>
<comment type="catalytic activity">
    <reaction evidence="7">
        <text>L-threonyl-[protein] + ATP = O-phospho-L-threonyl-[protein] + ADP + H(+)</text>
        <dbReference type="Rhea" id="RHEA:46608"/>
        <dbReference type="Rhea" id="RHEA-COMP:11060"/>
        <dbReference type="Rhea" id="RHEA-COMP:11605"/>
        <dbReference type="ChEBI" id="CHEBI:15378"/>
        <dbReference type="ChEBI" id="CHEBI:30013"/>
        <dbReference type="ChEBI" id="CHEBI:30616"/>
        <dbReference type="ChEBI" id="CHEBI:61977"/>
        <dbReference type="ChEBI" id="CHEBI:456216"/>
        <dbReference type="EC" id="2.7.11.1"/>
    </reaction>
</comment>
<comment type="subunit">
    <text evidence="1">Monomer.</text>
</comment>
<comment type="subcellular location">
    <subcellularLocation>
        <location evidence="1">Cytoplasm</location>
    </subcellularLocation>
    <subcellularLocation>
        <location evidence="4">Cell junction</location>
        <location evidence="4">Plasmodesma</location>
    </subcellularLocation>
    <text evidence="4">Present in punctate particles with granular structure.</text>
</comment>
<comment type="PTM">
    <text evidence="1">Autophosphorylated.</text>
</comment>
<comment type="similarity">
    <text evidence="7">Belongs to the protein kinase superfamily. CK1 Ser/Thr protein kinase family. Casein kinase I subfamily.</text>
</comment>
<proteinExistence type="evidence at transcript level"/>
<accession>Q9LW62</accession>
<accession>Q39051</accession>
<dbReference type="EC" id="2.7.11.1" evidence="7"/>
<dbReference type="EMBL" id="AY943849">
    <property type="protein sequence ID" value="AAY24539.1"/>
    <property type="molecule type" value="mRNA"/>
</dbReference>
<dbReference type="EMBL" id="AB015474">
    <property type="protein sequence ID" value="BAB02278.1"/>
    <property type="molecule type" value="Genomic_DNA"/>
</dbReference>
<dbReference type="EMBL" id="CP002686">
    <property type="protein sequence ID" value="AEE76754.1"/>
    <property type="molecule type" value="Genomic_DNA"/>
</dbReference>
<dbReference type="EMBL" id="AY054179">
    <property type="protein sequence ID" value="AAL06840.1"/>
    <property type="molecule type" value="mRNA"/>
</dbReference>
<dbReference type="EMBL" id="AY074556">
    <property type="protein sequence ID" value="AAL67096.1"/>
    <property type="molecule type" value="mRNA"/>
</dbReference>
<dbReference type="EMBL" id="X78819">
    <property type="protein sequence ID" value="CAA55396.1"/>
    <property type="molecule type" value="mRNA"/>
</dbReference>
<dbReference type="RefSeq" id="NP_188976.1">
    <property type="nucleotide sequence ID" value="NM_113237.3"/>
</dbReference>
<dbReference type="SMR" id="Q9LW62"/>
<dbReference type="FunCoup" id="Q9LW62">
    <property type="interactions" value="3717"/>
</dbReference>
<dbReference type="IntAct" id="Q9LW62">
    <property type="interactions" value="5"/>
</dbReference>
<dbReference type="STRING" id="3702.Q9LW62"/>
<dbReference type="PaxDb" id="3702-AT3G23340.1"/>
<dbReference type="EnsemblPlants" id="AT3G23340.1">
    <property type="protein sequence ID" value="AT3G23340.1"/>
    <property type="gene ID" value="AT3G23340"/>
</dbReference>
<dbReference type="GeneID" id="821915"/>
<dbReference type="Gramene" id="AT3G23340.1">
    <property type="protein sequence ID" value="AT3G23340.1"/>
    <property type="gene ID" value="AT3G23340"/>
</dbReference>
<dbReference type="KEGG" id="ath:AT3G23340"/>
<dbReference type="Araport" id="AT3G23340"/>
<dbReference type="TAIR" id="AT3G23340">
    <property type="gene designation" value="CKL10"/>
</dbReference>
<dbReference type="eggNOG" id="KOG1164">
    <property type="taxonomic scope" value="Eukaryota"/>
</dbReference>
<dbReference type="HOGENOM" id="CLU_019279_0_2_1"/>
<dbReference type="InParanoid" id="Q9LW62"/>
<dbReference type="OMA" id="YNIMVIE"/>
<dbReference type="OrthoDB" id="5800476at2759"/>
<dbReference type="PhylomeDB" id="Q9LW62"/>
<dbReference type="PRO" id="PR:Q9LW62"/>
<dbReference type="Proteomes" id="UP000006548">
    <property type="component" value="Chromosome 3"/>
</dbReference>
<dbReference type="ExpressionAtlas" id="Q9LW62">
    <property type="expression patterns" value="baseline and differential"/>
</dbReference>
<dbReference type="GO" id="GO:0005737">
    <property type="term" value="C:cytoplasm"/>
    <property type="evidence" value="ECO:0000314"/>
    <property type="project" value="UniProtKB"/>
</dbReference>
<dbReference type="GO" id="GO:0009506">
    <property type="term" value="C:plasmodesma"/>
    <property type="evidence" value="ECO:0007669"/>
    <property type="project" value="UniProtKB-SubCell"/>
</dbReference>
<dbReference type="GO" id="GO:0005524">
    <property type="term" value="F:ATP binding"/>
    <property type="evidence" value="ECO:0007669"/>
    <property type="project" value="UniProtKB-KW"/>
</dbReference>
<dbReference type="GO" id="GO:0106310">
    <property type="term" value="F:protein serine kinase activity"/>
    <property type="evidence" value="ECO:0007669"/>
    <property type="project" value="RHEA"/>
</dbReference>
<dbReference type="GO" id="GO:0004674">
    <property type="term" value="F:protein serine/threonine kinase activity"/>
    <property type="evidence" value="ECO:0007669"/>
    <property type="project" value="UniProtKB-KW"/>
</dbReference>
<dbReference type="CDD" id="cd14125">
    <property type="entry name" value="STKc_CK1_delta_epsilon"/>
    <property type="match status" value="1"/>
</dbReference>
<dbReference type="FunFam" id="1.10.510.10:FF:000164">
    <property type="entry name" value="Casein kinase 1-like protein"/>
    <property type="match status" value="1"/>
</dbReference>
<dbReference type="FunFam" id="3.30.200.20:FF:000538">
    <property type="entry name" value="Putative Casein kinase I"/>
    <property type="match status" value="1"/>
</dbReference>
<dbReference type="Gene3D" id="1.10.510.10">
    <property type="entry name" value="Transferase(Phosphotransferase) domain 1"/>
    <property type="match status" value="1"/>
</dbReference>
<dbReference type="InterPro" id="IPR050235">
    <property type="entry name" value="CK1_Ser-Thr_kinase"/>
</dbReference>
<dbReference type="InterPro" id="IPR011009">
    <property type="entry name" value="Kinase-like_dom_sf"/>
</dbReference>
<dbReference type="InterPro" id="IPR000719">
    <property type="entry name" value="Prot_kinase_dom"/>
</dbReference>
<dbReference type="InterPro" id="IPR017441">
    <property type="entry name" value="Protein_kinase_ATP_BS"/>
</dbReference>
<dbReference type="InterPro" id="IPR008271">
    <property type="entry name" value="Ser/Thr_kinase_AS"/>
</dbReference>
<dbReference type="PANTHER" id="PTHR11909">
    <property type="entry name" value="CASEIN KINASE-RELATED"/>
    <property type="match status" value="1"/>
</dbReference>
<dbReference type="Pfam" id="PF00069">
    <property type="entry name" value="Pkinase"/>
    <property type="match status" value="1"/>
</dbReference>
<dbReference type="SMART" id="SM00220">
    <property type="entry name" value="S_TKc"/>
    <property type="match status" value="1"/>
</dbReference>
<dbReference type="SUPFAM" id="SSF56112">
    <property type="entry name" value="Protein kinase-like (PK-like)"/>
    <property type="match status" value="1"/>
</dbReference>
<dbReference type="PROSITE" id="PS00107">
    <property type="entry name" value="PROTEIN_KINASE_ATP"/>
    <property type="match status" value="1"/>
</dbReference>
<dbReference type="PROSITE" id="PS50011">
    <property type="entry name" value="PROTEIN_KINASE_DOM"/>
    <property type="match status" value="1"/>
</dbReference>
<dbReference type="PROSITE" id="PS00108">
    <property type="entry name" value="PROTEIN_KINASE_ST"/>
    <property type="match status" value="1"/>
</dbReference>
<organism>
    <name type="scientific">Arabidopsis thaliana</name>
    <name type="common">Mouse-ear cress</name>
    <dbReference type="NCBI Taxonomy" id="3702"/>
    <lineage>
        <taxon>Eukaryota</taxon>
        <taxon>Viridiplantae</taxon>
        <taxon>Streptophyta</taxon>
        <taxon>Embryophyta</taxon>
        <taxon>Tracheophyta</taxon>
        <taxon>Spermatophyta</taxon>
        <taxon>Magnoliopsida</taxon>
        <taxon>eudicotyledons</taxon>
        <taxon>Gunneridae</taxon>
        <taxon>Pentapetalae</taxon>
        <taxon>rosids</taxon>
        <taxon>malvids</taxon>
        <taxon>Brassicales</taxon>
        <taxon>Brassicaceae</taxon>
        <taxon>Camelineae</taxon>
        <taxon>Arabidopsis</taxon>
    </lineage>
</organism>
<sequence length="442" mass="50381">MDHVIGGKFKLGRKIGSGSFGELYIGINVQTGEEVALKLEPVKTKHPQLHYESKVYMLLQGGTGVPHIKWFGVEGNYNCMAIDLLGPSLEDLFNYCTRSFSLKTVLMLADQLINRVEYMHSRGFLHRDIKPDNFLMGLGRKANQVYIIDYGLAKKYRDLQTHKHIPYRENKNLTGTARYASVNTHLGIEQSRRDDLESLGYVLMYFIRGSLPWQGLKAGTKKQKYEKISEKKMLTPVEVLCKSYPSEFTSYFHYCRSLRFEDKPDYSYLKRLFRDLFIREGYQFDYVFDWTILKYPQSGSISKPRPNPKPALDPPGPSAERNEKPIVGQDLRERFSGAVEAFARRNVPSHGIRPKHIFSDDASKEVQVSEKTRNEIATKMAVMSSSQPGSSGELSENRSSKLFSSSAQKIQPVQETKLSARLGRDDGLRSFDMLTIGSGKRK</sequence>
<gene>
    <name evidence="5" type="primary">CKL10</name>
    <name evidence="6" type="synonym">CKI2</name>
    <name evidence="8" type="ordered locus">At3g23340</name>
    <name evidence="9" type="ORF">MLM24.7</name>
</gene>
<feature type="chain" id="PRO_0000437149" description="Casein kinase 1-like protein 10">
    <location>
        <begin position="1"/>
        <end position="442"/>
    </location>
</feature>
<feature type="domain" description="Protein kinase" evidence="2">
    <location>
        <begin position="9"/>
        <end position="278"/>
    </location>
</feature>
<feature type="region of interest" description="Disordered" evidence="3">
    <location>
        <begin position="299"/>
        <end position="323"/>
    </location>
</feature>
<feature type="region of interest" description="Disordered" evidence="3">
    <location>
        <begin position="381"/>
        <end position="421"/>
    </location>
</feature>
<feature type="compositionally biased region" description="Pro residues" evidence="3">
    <location>
        <begin position="305"/>
        <end position="317"/>
    </location>
</feature>
<feature type="compositionally biased region" description="Low complexity" evidence="3">
    <location>
        <begin position="384"/>
        <end position="394"/>
    </location>
</feature>
<feature type="compositionally biased region" description="Polar residues" evidence="3">
    <location>
        <begin position="400"/>
        <end position="417"/>
    </location>
</feature>
<feature type="active site" description="Proton acceptor" evidence="2">
    <location>
        <position position="128"/>
    </location>
</feature>
<feature type="binding site" evidence="2">
    <location>
        <begin position="15"/>
        <end position="23"/>
    </location>
    <ligand>
        <name>ATP</name>
        <dbReference type="ChEBI" id="CHEBI:30616"/>
    </ligand>
</feature>
<feature type="binding site" evidence="2">
    <location>
        <position position="38"/>
    </location>
    <ligand>
        <name>ATP</name>
        <dbReference type="ChEBI" id="CHEBI:30616"/>
    </ligand>
</feature>
<keyword id="KW-0067">ATP-binding</keyword>
<keyword id="KW-0965">Cell junction</keyword>
<keyword id="KW-0963">Cytoplasm</keyword>
<keyword id="KW-0418">Kinase</keyword>
<keyword id="KW-0547">Nucleotide-binding</keyword>
<keyword id="KW-1185">Reference proteome</keyword>
<keyword id="KW-0723">Serine/threonine-protein kinase</keyword>
<keyword id="KW-0808">Transferase</keyword>
<protein>
    <recommendedName>
        <fullName evidence="7">Casein kinase 1-like protein 10</fullName>
        <ecNumber evidence="7">2.7.11.1</ecNumber>
    </recommendedName>
    <alternativeName>
        <fullName evidence="5">Protein CASEIN KINASE I-LIKE 10</fullName>
    </alternativeName>
</protein>